<evidence type="ECO:0000250" key="1"/>
<evidence type="ECO:0000250" key="2">
    <source>
        <dbReference type="UniProtKB" id="P25106"/>
    </source>
</evidence>
<evidence type="ECO:0000250" key="3">
    <source>
        <dbReference type="UniProtKB" id="P56485"/>
    </source>
</evidence>
<evidence type="ECO:0000255" key="4"/>
<evidence type="ECO:0000255" key="5">
    <source>
        <dbReference type="PROSITE-ProRule" id="PRU00521"/>
    </source>
</evidence>
<dbReference type="EMBL" id="X14048">
    <property type="protein sequence ID" value="CAA32206.1"/>
    <property type="molecule type" value="mRNA"/>
</dbReference>
<dbReference type="PIR" id="A30341">
    <property type="entry name" value="A30341"/>
</dbReference>
<dbReference type="RefSeq" id="NP_001003281.1">
    <property type="nucleotide sequence ID" value="NM_001003281.3"/>
</dbReference>
<dbReference type="RefSeq" id="XP_005635961.1">
    <property type="nucleotide sequence ID" value="XM_005635904.2"/>
</dbReference>
<dbReference type="RefSeq" id="XP_005635962.1">
    <property type="nucleotide sequence ID" value="XM_005635905.2"/>
</dbReference>
<dbReference type="RefSeq" id="XP_005635963.1">
    <property type="nucleotide sequence ID" value="XM_005635906.2"/>
</dbReference>
<dbReference type="RefSeq" id="XP_038290467.1">
    <property type="nucleotide sequence ID" value="XM_038434539.1"/>
</dbReference>
<dbReference type="RefSeq" id="XP_038290468.1">
    <property type="nucleotide sequence ID" value="XM_038434540.1"/>
</dbReference>
<dbReference type="RefSeq" id="XP_038290469.1">
    <property type="nucleotide sequence ID" value="XM_038434541.1"/>
</dbReference>
<dbReference type="SMR" id="P11613"/>
<dbReference type="FunCoup" id="P11613">
    <property type="interactions" value="220"/>
</dbReference>
<dbReference type="STRING" id="9615.ENSCAFP00000017975"/>
<dbReference type="BindingDB" id="P11613"/>
<dbReference type="ChEMBL" id="CHEMBL4739676"/>
<dbReference type="GlyCosmos" id="P11613">
    <property type="glycosylation" value="3 sites, No reported glycans"/>
</dbReference>
<dbReference type="PaxDb" id="9612-ENSCAFP00000017975"/>
<dbReference type="Ensembl" id="ENSCAFT00000019378.5">
    <property type="protein sequence ID" value="ENSCAFP00000017975.3"/>
    <property type="gene ID" value="ENSCAFG00000012206.5"/>
</dbReference>
<dbReference type="Ensembl" id="ENSCAFT00000096882.1">
    <property type="protein sequence ID" value="ENSCAFP00000067242.1"/>
    <property type="gene ID" value="ENSCAFG00000012206.5"/>
</dbReference>
<dbReference type="Ensembl" id="ENSCAFT00845048801.1">
    <property type="protein sequence ID" value="ENSCAFP00845038289.1"/>
    <property type="gene ID" value="ENSCAFG00845027671.1"/>
</dbReference>
<dbReference type="Ensembl" id="ENSCAFT00845048817.1">
    <property type="protein sequence ID" value="ENSCAFP00845038301.1"/>
    <property type="gene ID" value="ENSCAFG00845027671.1"/>
</dbReference>
<dbReference type="GeneID" id="403964"/>
<dbReference type="KEGG" id="cfa:403964"/>
<dbReference type="CTD" id="57007"/>
<dbReference type="VEuPathDB" id="HostDB:ENSCAFG00845027671"/>
<dbReference type="VGNC" id="VGNC:37509">
    <property type="gene designation" value="ACKR3"/>
</dbReference>
<dbReference type="eggNOG" id="KOG3656">
    <property type="taxonomic scope" value="Eukaryota"/>
</dbReference>
<dbReference type="GeneTree" id="ENSGT01110000267168"/>
<dbReference type="HOGENOM" id="CLU_009579_8_3_1"/>
<dbReference type="InParanoid" id="P11613"/>
<dbReference type="OMA" id="CRPVYPP"/>
<dbReference type="OrthoDB" id="5963140at2759"/>
<dbReference type="TreeFam" id="TF333489"/>
<dbReference type="Proteomes" id="UP000002254">
    <property type="component" value="Chromosome 25"/>
</dbReference>
<dbReference type="Proteomes" id="UP000694429">
    <property type="component" value="Unplaced"/>
</dbReference>
<dbReference type="Proteomes" id="UP000694542">
    <property type="component" value="Unplaced"/>
</dbReference>
<dbReference type="Proteomes" id="UP000805418">
    <property type="component" value="Chromosome 25"/>
</dbReference>
<dbReference type="Bgee" id="ENSCAFG00000012206">
    <property type="expression patterns" value="Expressed in bone marrow and 48 other cell types or tissues"/>
</dbReference>
<dbReference type="GO" id="GO:0009986">
    <property type="term" value="C:cell surface"/>
    <property type="evidence" value="ECO:0000250"/>
    <property type="project" value="UniProtKB"/>
</dbReference>
<dbReference type="GO" id="GO:0005905">
    <property type="term" value="C:clathrin-coated pit"/>
    <property type="evidence" value="ECO:0000250"/>
    <property type="project" value="UniProtKB"/>
</dbReference>
<dbReference type="GO" id="GO:0005769">
    <property type="term" value="C:early endosome"/>
    <property type="evidence" value="ECO:0007669"/>
    <property type="project" value="UniProtKB-SubCell"/>
</dbReference>
<dbReference type="GO" id="GO:0005768">
    <property type="term" value="C:endosome"/>
    <property type="evidence" value="ECO:0000250"/>
    <property type="project" value="UniProtKB"/>
</dbReference>
<dbReference type="GO" id="GO:0009897">
    <property type="term" value="C:external side of plasma membrane"/>
    <property type="evidence" value="ECO:0000318"/>
    <property type="project" value="GO_Central"/>
</dbReference>
<dbReference type="GO" id="GO:0005886">
    <property type="term" value="C:plasma membrane"/>
    <property type="evidence" value="ECO:0000250"/>
    <property type="project" value="UniProtKB"/>
</dbReference>
<dbReference type="GO" id="GO:0055037">
    <property type="term" value="C:recycling endosome"/>
    <property type="evidence" value="ECO:0007669"/>
    <property type="project" value="UniProtKB-SubCell"/>
</dbReference>
<dbReference type="GO" id="GO:0019957">
    <property type="term" value="F:C-C chemokine binding"/>
    <property type="evidence" value="ECO:0000318"/>
    <property type="project" value="GO_Central"/>
</dbReference>
<dbReference type="GO" id="GO:0016493">
    <property type="term" value="F:C-C chemokine receptor activity"/>
    <property type="evidence" value="ECO:0000318"/>
    <property type="project" value="GO_Central"/>
</dbReference>
<dbReference type="GO" id="GO:0019958">
    <property type="term" value="F:C-X-C chemokine binding"/>
    <property type="evidence" value="ECO:0000250"/>
    <property type="project" value="UniProtKB"/>
</dbReference>
<dbReference type="GO" id="GO:0016494">
    <property type="term" value="F:C-X-C chemokine receptor activity"/>
    <property type="evidence" value="ECO:0007669"/>
    <property type="project" value="Ensembl"/>
</dbReference>
<dbReference type="GO" id="GO:0015026">
    <property type="term" value="F:coreceptor activity"/>
    <property type="evidence" value="ECO:0007669"/>
    <property type="project" value="InterPro"/>
</dbReference>
<dbReference type="GO" id="GO:0005044">
    <property type="term" value="F:scavenger receptor activity"/>
    <property type="evidence" value="ECO:0000250"/>
    <property type="project" value="UniProtKB"/>
</dbReference>
<dbReference type="GO" id="GO:0001525">
    <property type="term" value="P:angiogenesis"/>
    <property type="evidence" value="ECO:0007669"/>
    <property type="project" value="InterPro"/>
</dbReference>
<dbReference type="GO" id="GO:0019722">
    <property type="term" value="P:calcium-mediated signaling"/>
    <property type="evidence" value="ECO:0000318"/>
    <property type="project" value="GO_Central"/>
</dbReference>
<dbReference type="GO" id="GO:0007155">
    <property type="term" value="P:cell adhesion"/>
    <property type="evidence" value="ECO:0007669"/>
    <property type="project" value="UniProtKB-KW"/>
</dbReference>
<dbReference type="GO" id="GO:0060326">
    <property type="term" value="P:cell chemotaxis"/>
    <property type="evidence" value="ECO:0000318"/>
    <property type="project" value="GO_Central"/>
</dbReference>
<dbReference type="GO" id="GO:0006955">
    <property type="term" value="P:immune response"/>
    <property type="evidence" value="ECO:0000318"/>
    <property type="project" value="GO_Central"/>
</dbReference>
<dbReference type="GO" id="GO:0008285">
    <property type="term" value="P:negative regulation of cell population proliferation"/>
    <property type="evidence" value="ECO:0007669"/>
    <property type="project" value="Ensembl"/>
</dbReference>
<dbReference type="GO" id="GO:1902230">
    <property type="term" value="P:negative regulation of intrinsic apoptotic signaling pathway in response to DNA damage"/>
    <property type="evidence" value="ECO:0007669"/>
    <property type="project" value="Ensembl"/>
</dbReference>
<dbReference type="GO" id="GO:0021557">
    <property type="term" value="P:oculomotor nerve development"/>
    <property type="evidence" value="ECO:0000250"/>
    <property type="project" value="UniProtKB"/>
</dbReference>
<dbReference type="GO" id="GO:0007204">
    <property type="term" value="P:positive regulation of cytosolic calcium ion concentration"/>
    <property type="evidence" value="ECO:0000318"/>
    <property type="project" value="GO_Central"/>
</dbReference>
<dbReference type="GO" id="GO:0070374">
    <property type="term" value="P:positive regulation of ERK1 and ERK2 cascade"/>
    <property type="evidence" value="ECO:0000250"/>
    <property type="project" value="UniProtKB"/>
</dbReference>
<dbReference type="GO" id="GO:0031623">
    <property type="term" value="P:receptor internalization"/>
    <property type="evidence" value="ECO:0000250"/>
    <property type="project" value="UniProtKB"/>
</dbReference>
<dbReference type="GO" id="GO:0001570">
    <property type="term" value="P:vasculogenesis"/>
    <property type="evidence" value="ECO:0007669"/>
    <property type="project" value="InterPro"/>
</dbReference>
<dbReference type="CDD" id="cd14987">
    <property type="entry name" value="7tmA_ACKR3_CXCR7"/>
    <property type="match status" value="1"/>
</dbReference>
<dbReference type="FunFam" id="1.20.1070.10:FF:000141">
    <property type="entry name" value="atypical chemokine receptor 3"/>
    <property type="match status" value="1"/>
</dbReference>
<dbReference type="Gene3D" id="1.20.1070.10">
    <property type="entry name" value="Rhodopsin 7-helix transmembrane proteins"/>
    <property type="match status" value="1"/>
</dbReference>
<dbReference type="InterPro" id="IPR001416">
    <property type="entry name" value="ACKR3"/>
</dbReference>
<dbReference type="InterPro" id="IPR000276">
    <property type="entry name" value="GPCR_Rhodpsn"/>
</dbReference>
<dbReference type="InterPro" id="IPR017452">
    <property type="entry name" value="GPCR_Rhodpsn_7TM"/>
</dbReference>
<dbReference type="InterPro" id="IPR047143">
    <property type="entry name" value="GPER1-like"/>
</dbReference>
<dbReference type="PANTHER" id="PTHR24226:SF5">
    <property type="entry name" value="CHEMOKINE (C-X-C MOTIF) RECEPTOR 7"/>
    <property type="match status" value="1"/>
</dbReference>
<dbReference type="PANTHER" id="PTHR24226">
    <property type="entry name" value="G-PROTEIN COUPLED RECEPTOR 182 AND ESTROGEN RECEPTOR 1"/>
    <property type="match status" value="1"/>
</dbReference>
<dbReference type="Pfam" id="PF00001">
    <property type="entry name" value="7tm_1"/>
    <property type="match status" value="1"/>
</dbReference>
<dbReference type="PRINTS" id="PR00237">
    <property type="entry name" value="GPCRRHODOPSN"/>
</dbReference>
<dbReference type="PRINTS" id="PR00646">
    <property type="entry name" value="RDC1ORPHANR"/>
</dbReference>
<dbReference type="SUPFAM" id="SSF81321">
    <property type="entry name" value="Family A G protein-coupled receptor-like"/>
    <property type="match status" value="1"/>
</dbReference>
<dbReference type="PROSITE" id="PS00237">
    <property type="entry name" value="G_PROTEIN_RECEP_F1_1"/>
    <property type="match status" value="1"/>
</dbReference>
<dbReference type="PROSITE" id="PS50262">
    <property type="entry name" value="G_PROTEIN_RECEP_F1_2"/>
    <property type="match status" value="1"/>
</dbReference>
<keyword id="KW-0130">Cell adhesion</keyword>
<keyword id="KW-1003">Cell membrane</keyword>
<keyword id="KW-0217">Developmental protein</keyword>
<keyword id="KW-1015">Disulfide bond</keyword>
<keyword id="KW-0967">Endosome</keyword>
<keyword id="KW-0297">G-protein coupled receptor</keyword>
<keyword id="KW-0325">Glycoprotein</keyword>
<keyword id="KW-0472">Membrane</keyword>
<keyword id="KW-0597">Phosphoprotein</keyword>
<keyword id="KW-0675">Receptor</keyword>
<keyword id="KW-1185">Reference proteome</keyword>
<keyword id="KW-0807">Transducer</keyword>
<keyword id="KW-0812">Transmembrane</keyword>
<keyword id="KW-1133">Transmembrane helix</keyword>
<keyword id="KW-0832">Ubl conjugation</keyword>
<proteinExistence type="evidence at transcript level"/>
<protein>
    <recommendedName>
        <fullName>Atypical chemokine receptor 3</fullName>
    </recommendedName>
    <alternativeName>
        <fullName>C-X-C chemokine receptor type 7</fullName>
        <shortName>CXC-R7</shortName>
        <shortName>CXCR-7</shortName>
    </alternativeName>
    <alternativeName>
        <fullName>Chemokine orphan receptor 1</fullName>
    </alternativeName>
    <alternativeName>
        <fullName>G-protein coupled receptor RDC1</fullName>
        <shortName>RDC-1</shortName>
    </alternativeName>
</protein>
<reference key="1">
    <citation type="journal article" date="1989" name="Science">
        <title>Selective amplification and cloning of four new members of the G protein-coupled receptor family.</title>
        <authorList>
            <person name="Libert F."/>
            <person name="Parmentier M."/>
            <person name="Lefort A."/>
            <person name="Dinsart C."/>
            <person name="van Sande J."/>
            <person name="Maenhaut C."/>
            <person name="Simons M.-J."/>
            <person name="Dumont J.E."/>
            <person name="Vassart G."/>
        </authorList>
    </citation>
    <scope>NUCLEOTIDE SEQUENCE [MRNA]</scope>
    <source>
        <tissue>Thyroid</tissue>
    </source>
</reference>
<reference key="2">
    <citation type="journal article" date="1990" name="Nucleic Acids Res.">
        <title>Complete nucleotide sequence of a putative G protein coupled receptor: RDC1.</title>
        <authorList>
            <person name="Libert F."/>
            <person name="Parmentier M."/>
            <person name="Lefort A."/>
            <person name="Dumont J.E."/>
            <person name="Vassart G."/>
        </authorList>
    </citation>
    <scope>NUCLEOTIDE SEQUENCE [MRNA]</scope>
    <source>
        <tissue>Thyroid</tissue>
    </source>
</reference>
<reference key="3">
    <citation type="journal article" date="1992" name="FEBS Lett.">
        <title>Characterization of the RDC1 gene which encodes the canine homolog of a proposed human VIP receptor. Expression does not correlate with an increase in VIP binding sites.</title>
        <authorList>
            <person name="Cook J.S."/>
            <person name="Wolsing D.H."/>
            <person name="Lameh J."/>
            <person name="Olson C.A."/>
            <person name="Correa P.E."/>
            <person name="Sadee W."/>
            <person name="Blumnthal E.M."/>
            <person name="Rosenbaum J.S."/>
        </authorList>
    </citation>
    <scope>SHOWS THAT RDC1 IS NOT A VIP RECEPTOR</scope>
</reference>
<feature type="chain" id="PRO_0000070100" description="Atypical chemokine receptor 3">
    <location>
        <begin position="1"/>
        <end position="362"/>
    </location>
</feature>
<feature type="topological domain" description="Extracellular" evidence="4">
    <location>
        <begin position="1"/>
        <end position="40"/>
    </location>
</feature>
<feature type="transmembrane region" description="Helical; Name=1" evidence="4">
    <location>
        <begin position="41"/>
        <end position="61"/>
    </location>
</feature>
<feature type="topological domain" description="Cytoplasmic" evidence="4">
    <location>
        <begin position="62"/>
        <end position="81"/>
    </location>
</feature>
<feature type="transmembrane region" description="Helical; Name=2" evidence="4">
    <location>
        <begin position="82"/>
        <end position="102"/>
    </location>
</feature>
<feature type="topological domain" description="Extracellular" evidence="4">
    <location>
        <begin position="103"/>
        <end position="118"/>
    </location>
</feature>
<feature type="transmembrane region" description="Helical; Name=3" evidence="4">
    <location>
        <begin position="119"/>
        <end position="139"/>
    </location>
</feature>
<feature type="topological domain" description="Cytoplasmic" evidence="4">
    <location>
        <begin position="140"/>
        <end position="162"/>
    </location>
</feature>
<feature type="transmembrane region" description="Helical; Name=4" evidence="4">
    <location>
        <begin position="163"/>
        <end position="183"/>
    </location>
</feature>
<feature type="topological domain" description="Extracellular" evidence="4">
    <location>
        <begin position="184"/>
        <end position="213"/>
    </location>
</feature>
<feature type="transmembrane region" description="Helical; Name=5" evidence="4">
    <location>
        <begin position="214"/>
        <end position="234"/>
    </location>
</feature>
<feature type="topological domain" description="Cytoplasmic" evidence="4">
    <location>
        <begin position="235"/>
        <end position="252"/>
    </location>
</feature>
<feature type="transmembrane region" description="Helical; Name=6" evidence="4">
    <location>
        <begin position="253"/>
        <end position="273"/>
    </location>
</feature>
<feature type="topological domain" description="Extracellular" evidence="4">
    <location>
        <begin position="274"/>
        <end position="296"/>
    </location>
</feature>
<feature type="transmembrane region" description="Helical; Name=7" evidence="4">
    <location>
        <begin position="297"/>
        <end position="319"/>
    </location>
</feature>
<feature type="topological domain" description="Cytoplasmic" evidence="4">
    <location>
        <begin position="320"/>
        <end position="362"/>
    </location>
</feature>
<feature type="region of interest" description="C-terminal cytoplasmic tail" evidence="1">
    <location>
        <begin position="324"/>
        <end position="362"/>
    </location>
</feature>
<feature type="modified residue" description="Phosphoserine" evidence="3">
    <location>
        <position position="347"/>
    </location>
</feature>
<feature type="modified residue" description="Phosphoserine" evidence="3">
    <location>
        <position position="350"/>
    </location>
</feature>
<feature type="modified residue" description="Phosphoserine" evidence="3">
    <location>
        <position position="355"/>
    </location>
</feature>
<feature type="glycosylation site" description="N-linked (GlcNAc...) asparagine" evidence="4">
    <location>
        <position position="13"/>
    </location>
</feature>
<feature type="glycosylation site" description="N-linked (GlcNAc...) asparagine" evidence="4">
    <location>
        <position position="22"/>
    </location>
</feature>
<feature type="glycosylation site" description="N-linked (GlcNAc...) asparagine" evidence="4">
    <location>
        <position position="39"/>
    </location>
</feature>
<feature type="disulfide bond" evidence="5">
    <location>
        <begin position="117"/>
        <end position="196"/>
    </location>
</feature>
<accession>P11613</accession>
<name>ACKR3_CANLF</name>
<organism>
    <name type="scientific">Canis lupus familiaris</name>
    <name type="common">Dog</name>
    <name type="synonym">Canis familiaris</name>
    <dbReference type="NCBI Taxonomy" id="9615"/>
    <lineage>
        <taxon>Eukaryota</taxon>
        <taxon>Metazoa</taxon>
        <taxon>Chordata</taxon>
        <taxon>Craniata</taxon>
        <taxon>Vertebrata</taxon>
        <taxon>Euteleostomi</taxon>
        <taxon>Mammalia</taxon>
        <taxon>Eutheria</taxon>
        <taxon>Laurasiatheria</taxon>
        <taxon>Carnivora</taxon>
        <taxon>Caniformia</taxon>
        <taxon>Canidae</taxon>
        <taxon>Canis</taxon>
    </lineage>
</organism>
<gene>
    <name type="primary">ACKR3</name>
    <name type="synonym">CMKOR1</name>
    <name type="synonym">CXCR7</name>
    <name type="synonym">RDC1</name>
</gene>
<comment type="function">
    <text evidence="2">Atypical chemokine receptor that controls chemokine levels and localization via high-affinity chemokine binding that is uncoupled from classic ligand-driven signal transduction cascades, resulting instead in chemokine sequestration, degradation, or transcytosis. Also known as interceptor (internalizing receptor) or chemokine-scavenging receptor or chemokine decoy receptor. Acts as a receptor for chemokines CXCL11 and CXCL12/SDF1. Chemokine binding does not activate G-protein-mediated signal transduction but instead induces beta-arrestin recruitment, leading to ligand internalization and activation of MAPK signaling pathway. Required for regulation of CXCR4 protein levels in migrating interneurons, thereby adapting their chemokine responsiveness. In glioma cells, transduces signals via MEK/ERK pathway, mediating resistance to apoptosis. Promotes cell growth and survival. Not involved in cell migration, adhesion or proliferation of normal hematopoietic progenitors but activated by CXCL11 in malignant hemapoietic cells, leading to phosphorylation of ERK1/2 (MAPK3/MAPK1) and enhanced cell adhesion and migration. Plays a regulatory role in CXCR4-mediated activation of cell surface integrins by CXCL12. Required for heart valve development. Regulates axon guidance in the oculomotor system through the regulation of CXCL12 levels.</text>
</comment>
<comment type="subunit">
    <text evidence="2">Homodimer. Can form heterodimers with CXCR4; heterodimerization may regulate CXCR4 signaling activity. Interacts with ARRB1 and ARRB2.</text>
</comment>
<comment type="subcellular location">
    <subcellularLocation>
        <location evidence="2">Cell membrane</location>
        <topology evidence="4">Multi-pass membrane protein</topology>
    </subcellularLocation>
    <subcellularLocation>
        <location evidence="2">Early endosome</location>
    </subcellularLocation>
    <subcellularLocation>
        <location evidence="2">Recycling endosome</location>
    </subcellularLocation>
    <text evidence="2">Predominantly localizes to endocytic vesicles, and upon stimulation by the ligand is internalized via clathrin-coated pits in a beta-arrestin-dependent manner. Once internalized, the ligand dissociates from the receptor, and is targeted to degradation while the receptor is recycled back to the cell membrane.</text>
</comment>
<comment type="domain">
    <text evidence="2">The C-terminal cytoplasmic tail, plays a key role in: correct trafficking to the cell membrane, recruitment of beta-arrestin, ubiquitination, and in chemokine scavenging and signaling functions. The Ser/Thr residues and the Lys residues in the C-terminal cytoplasmic tail are essential for beta-arrestin recruitment and ubiquitination respectively.</text>
</comment>
<comment type="PTM">
    <text evidence="2">The Ser/Thr residues in the C-terminal cytoplasmic tail may be phosphorylated.</text>
</comment>
<comment type="PTM">
    <text evidence="2">Ubiquitinated at the Lys residues in its C-terminal cytoplasmic tail and is essential for correct trafficking from and to the cell membrane. Deubiquitinated by CXCL12-stimulation in a reversible manner.</text>
</comment>
<comment type="similarity">
    <text evidence="5">Belongs to the G-protein coupled receptor 1 family. Atypical chemokine receptor subfamily.</text>
</comment>
<sequence length="362" mass="41416">MDLHLFDYAEPGNFSDISWPCNSSDCIVVDTVLCPNMPNKSVLLYTLSFIYIFIFVIGMIANSVVVWVNIQAKTTGYDTHCYILNLAIADLWVVVTIPVWVVSLVQHNQWPMGELTCKITHLIFSINLFGSIFFLTCMSVDRYLSITYFASTSSRRKKVVRRAVCVLVWLLAFCVSLPDTYYLKTVTSASNNETYCRSFYPEHSVKEWLISMELVSVVLGFAIPFCVIAVFYCLLARAISASSDQEKQSSRKIIFSYVVVFLVCWLPYHVVVLLDIFSILHYIPFTCQLENFLFTALHVTQCLSLVHCCVNPVLYSFINRNYRYELMKAFIFKYSAKTGLTKLIDASRVSETEYSALEQNAK</sequence>